<keyword id="KW-0028">Amino-acid biosynthesis</keyword>
<keyword id="KW-0100">Branched-chain amino acid biosynthesis</keyword>
<keyword id="KW-0432">Leucine biosynthesis</keyword>
<keyword id="KW-0456">Lyase</keyword>
<keyword id="KW-1185">Reference proteome</keyword>
<sequence length="208" mass="23728">MDKFTVLTAIAAPLPVANVDTDKIIPARFLKTIKRTGLGTHLFDAMRYIDGQENPDFVLNREPYRQAQILVTHENFGCGSSREHAPWALLDFGIRCVIAPDFADIFYNNSFKNGILPIRLPRDICDRLMDDAGNGANSRLTVDLERQVVVRPNGEEIPFEIDPFRRHLLLNGLDDIGQTLQRREAIDRFEENRTVTQPWFPRITLPAN</sequence>
<reference key="1">
    <citation type="journal article" date="2007" name="J. Bacteriol.">
        <title>Genome sequence analysis of the emerging human pathogenic acetic acid bacterium Granulibacter bethesdensis.</title>
        <authorList>
            <person name="Greenberg D.E."/>
            <person name="Porcella S.F."/>
            <person name="Zelazny A.M."/>
            <person name="Virtaneva K."/>
            <person name="Sturdevant D.E."/>
            <person name="Kupko J.J. III"/>
            <person name="Barbian K.D."/>
            <person name="Babar A."/>
            <person name="Dorward D.W."/>
            <person name="Holland S.M."/>
        </authorList>
    </citation>
    <scope>NUCLEOTIDE SEQUENCE [LARGE SCALE GENOMIC DNA]</scope>
    <source>
        <strain>ATCC BAA-1260 / CGDNIH1</strain>
    </source>
</reference>
<protein>
    <recommendedName>
        <fullName evidence="1">3-isopropylmalate dehydratase small subunit</fullName>
        <ecNumber evidence="1">4.2.1.33</ecNumber>
    </recommendedName>
    <alternativeName>
        <fullName evidence="1">Alpha-IPM isomerase</fullName>
        <shortName evidence="1">IPMI</shortName>
    </alternativeName>
    <alternativeName>
        <fullName evidence="1">Isopropylmalate isomerase</fullName>
    </alternativeName>
</protein>
<feature type="chain" id="PRO_1000063769" description="3-isopropylmalate dehydratase small subunit">
    <location>
        <begin position="1"/>
        <end position="208"/>
    </location>
</feature>
<dbReference type="EC" id="4.2.1.33" evidence="1"/>
<dbReference type="EMBL" id="CP000394">
    <property type="protein sequence ID" value="ABI62577.1"/>
    <property type="molecule type" value="Genomic_DNA"/>
</dbReference>
<dbReference type="RefSeq" id="WP_011632381.1">
    <property type="nucleotide sequence ID" value="NC_008343.2"/>
</dbReference>
<dbReference type="SMR" id="Q0BRH5"/>
<dbReference type="STRING" id="391165.GbCGDNIH1_1679"/>
<dbReference type="KEGG" id="gbe:GbCGDNIH1_1679"/>
<dbReference type="eggNOG" id="COG0066">
    <property type="taxonomic scope" value="Bacteria"/>
</dbReference>
<dbReference type="HOGENOM" id="CLU_081378_0_3_5"/>
<dbReference type="OrthoDB" id="9777465at2"/>
<dbReference type="UniPathway" id="UPA00048">
    <property type="reaction ID" value="UER00071"/>
</dbReference>
<dbReference type="Proteomes" id="UP000001963">
    <property type="component" value="Chromosome"/>
</dbReference>
<dbReference type="GO" id="GO:0009316">
    <property type="term" value="C:3-isopropylmalate dehydratase complex"/>
    <property type="evidence" value="ECO:0007669"/>
    <property type="project" value="InterPro"/>
</dbReference>
<dbReference type="GO" id="GO:0003861">
    <property type="term" value="F:3-isopropylmalate dehydratase activity"/>
    <property type="evidence" value="ECO:0007669"/>
    <property type="project" value="UniProtKB-UniRule"/>
</dbReference>
<dbReference type="GO" id="GO:0009098">
    <property type="term" value="P:L-leucine biosynthetic process"/>
    <property type="evidence" value="ECO:0007669"/>
    <property type="project" value="UniProtKB-UniRule"/>
</dbReference>
<dbReference type="CDD" id="cd01577">
    <property type="entry name" value="IPMI_Swivel"/>
    <property type="match status" value="1"/>
</dbReference>
<dbReference type="FunFam" id="3.20.19.10:FF:000003">
    <property type="entry name" value="3-isopropylmalate dehydratase small subunit"/>
    <property type="match status" value="1"/>
</dbReference>
<dbReference type="Gene3D" id="3.20.19.10">
    <property type="entry name" value="Aconitase, domain 4"/>
    <property type="match status" value="1"/>
</dbReference>
<dbReference type="HAMAP" id="MF_01031">
    <property type="entry name" value="LeuD_type1"/>
    <property type="match status" value="1"/>
</dbReference>
<dbReference type="InterPro" id="IPR004431">
    <property type="entry name" value="3-IsopropMal_deHydase_ssu"/>
</dbReference>
<dbReference type="InterPro" id="IPR015928">
    <property type="entry name" value="Aconitase/3IPM_dehydase_swvl"/>
</dbReference>
<dbReference type="InterPro" id="IPR000573">
    <property type="entry name" value="AconitaseA/IPMdHydase_ssu_swvl"/>
</dbReference>
<dbReference type="InterPro" id="IPR033940">
    <property type="entry name" value="IPMI_Swivel"/>
</dbReference>
<dbReference type="InterPro" id="IPR050075">
    <property type="entry name" value="LeuD"/>
</dbReference>
<dbReference type="NCBIfam" id="TIGR00171">
    <property type="entry name" value="leuD"/>
    <property type="match status" value="1"/>
</dbReference>
<dbReference type="NCBIfam" id="NF002458">
    <property type="entry name" value="PRK01641.1"/>
    <property type="match status" value="1"/>
</dbReference>
<dbReference type="PANTHER" id="PTHR43345:SF5">
    <property type="entry name" value="3-ISOPROPYLMALATE DEHYDRATASE SMALL SUBUNIT"/>
    <property type="match status" value="1"/>
</dbReference>
<dbReference type="PANTHER" id="PTHR43345">
    <property type="entry name" value="3-ISOPROPYLMALATE DEHYDRATASE SMALL SUBUNIT 2-RELATED-RELATED"/>
    <property type="match status" value="1"/>
</dbReference>
<dbReference type="Pfam" id="PF00694">
    <property type="entry name" value="Aconitase_C"/>
    <property type="match status" value="1"/>
</dbReference>
<dbReference type="SUPFAM" id="SSF52016">
    <property type="entry name" value="LeuD/IlvD-like"/>
    <property type="match status" value="1"/>
</dbReference>
<gene>
    <name evidence="1" type="primary">leuD</name>
    <name type="ordered locus">GbCGDNIH1_1679</name>
</gene>
<evidence type="ECO:0000255" key="1">
    <source>
        <dbReference type="HAMAP-Rule" id="MF_01031"/>
    </source>
</evidence>
<comment type="function">
    <text evidence="1">Catalyzes the isomerization between 2-isopropylmalate and 3-isopropylmalate, via the formation of 2-isopropylmaleate.</text>
</comment>
<comment type="catalytic activity">
    <reaction evidence="1">
        <text>(2R,3S)-3-isopropylmalate = (2S)-2-isopropylmalate</text>
        <dbReference type="Rhea" id="RHEA:32287"/>
        <dbReference type="ChEBI" id="CHEBI:1178"/>
        <dbReference type="ChEBI" id="CHEBI:35121"/>
        <dbReference type="EC" id="4.2.1.33"/>
    </reaction>
</comment>
<comment type="pathway">
    <text evidence="1">Amino-acid biosynthesis; L-leucine biosynthesis; L-leucine from 3-methyl-2-oxobutanoate: step 2/4.</text>
</comment>
<comment type="subunit">
    <text evidence="1">Heterodimer of LeuC and LeuD.</text>
</comment>
<comment type="similarity">
    <text evidence="1">Belongs to the LeuD family. LeuD type 1 subfamily.</text>
</comment>
<organism>
    <name type="scientific">Granulibacter bethesdensis (strain ATCC BAA-1260 / CGDNIH1)</name>
    <dbReference type="NCBI Taxonomy" id="391165"/>
    <lineage>
        <taxon>Bacteria</taxon>
        <taxon>Pseudomonadati</taxon>
        <taxon>Pseudomonadota</taxon>
        <taxon>Alphaproteobacteria</taxon>
        <taxon>Acetobacterales</taxon>
        <taxon>Acetobacteraceae</taxon>
        <taxon>Granulibacter</taxon>
    </lineage>
</organism>
<proteinExistence type="inferred from homology"/>
<name>LEUD_GRABC</name>
<accession>Q0BRH5</accession>